<gene>
    <name type="primary">lplA</name>
    <name type="synonym">yjjF</name>
    <name type="ordered locus">b4386</name>
    <name type="ordered locus">JW4349</name>
</gene>
<dbReference type="EC" id="6.3.1.20"/>
<dbReference type="EMBL" id="L27665">
    <property type="protein sequence ID" value="AAA21740.1"/>
    <property type="molecule type" value="Genomic_DNA"/>
</dbReference>
<dbReference type="EMBL" id="U14003">
    <property type="protein sequence ID" value="AAA97282.1"/>
    <property type="molecule type" value="Genomic_DNA"/>
</dbReference>
<dbReference type="EMBL" id="U00096">
    <property type="protein sequence ID" value="AAC77339.1"/>
    <property type="molecule type" value="Genomic_DNA"/>
</dbReference>
<dbReference type="EMBL" id="AP009048">
    <property type="protein sequence ID" value="BAE78375.1"/>
    <property type="molecule type" value="Genomic_DNA"/>
</dbReference>
<dbReference type="EMBL" id="X03046">
    <property type="protein sequence ID" value="CAA26854.1"/>
    <property type="molecule type" value="Genomic_DNA"/>
</dbReference>
<dbReference type="PIR" id="A54035">
    <property type="entry name" value="A54035"/>
</dbReference>
<dbReference type="RefSeq" id="NP_418803.1">
    <property type="nucleotide sequence ID" value="NC_000913.3"/>
</dbReference>
<dbReference type="RefSeq" id="WP_000105884.1">
    <property type="nucleotide sequence ID" value="NZ_LN832404.1"/>
</dbReference>
<dbReference type="PDB" id="1X2G">
    <property type="method" value="X-ray"/>
    <property type="resolution" value="2.40 A"/>
    <property type="chains" value="A/B/C=2-338"/>
</dbReference>
<dbReference type="PDB" id="1X2H">
    <property type="method" value="X-ray"/>
    <property type="resolution" value="2.91 A"/>
    <property type="chains" value="A/B/C=2-338"/>
</dbReference>
<dbReference type="PDB" id="3A7A">
    <property type="method" value="X-ray"/>
    <property type="resolution" value="3.10 A"/>
    <property type="chains" value="A/C=2-338"/>
</dbReference>
<dbReference type="PDB" id="3A7R">
    <property type="method" value="X-ray"/>
    <property type="resolution" value="2.05 A"/>
    <property type="chains" value="A=2-338"/>
</dbReference>
<dbReference type="PDB" id="4TVW">
    <property type="method" value="X-ray"/>
    <property type="resolution" value="3.50 A"/>
    <property type="chains" value="A/B/C/D=1-338"/>
</dbReference>
<dbReference type="PDB" id="4TVY">
    <property type="method" value="X-ray"/>
    <property type="resolution" value="2.15 A"/>
    <property type="chains" value="A/B=1-338"/>
</dbReference>
<dbReference type="PDBsum" id="1X2G"/>
<dbReference type="PDBsum" id="1X2H"/>
<dbReference type="PDBsum" id="3A7A"/>
<dbReference type="PDBsum" id="3A7R"/>
<dbReference type="PDBsum" id="4TVW"/>
<dbReference type="PDBsum" id="4TVY"/>
<dbReference type="SMR" id="P32099"/>
<dbReference type="BioGRID" id="4262787">
    <property type="interactions" value="26"/>
</dbReference>
<dbReference type="DIP" id="DIP-10119N"/>
<dbReference type="FunCoup" id="P32099">
    <property type="interactions" value="620"/>
</dbReference>
<dbReference type="IntAct" id="P32099">
    <property type="interactions" value="3"/>
</dbReference>
<dbReference type="STRING" id="511145.b4386"/>
<dbReference type="jPOST" id="P32099"/>
<dbReference type="PaxDb" id="511145-b4386"/>
<dbReference type="DNASU" id="944865"/>
<dbReference type="EnsemblBacteria" id="AAC77339">
    <property type="protein sequence ID" value="AAC77339"/>
    <property type="gene ID" value="b4386"/>
</dbReference>
<dbReference type="GeneID" id="944865"/>
<dbReference type="KEGG" id="ecj:JW4349"/>
<dbReference type="KEGG" id="eco:b4386"/>
<dbReference type="KEGG" id="ecoc:C3026_23700"/>
<dbReference type="PATRIC" id="fig|1411691.4.peg.2299"/>
<dbReference type="EchoBASE" id="EB1744"/>
<dbReference type="eggNOG" id="COG0095">
    <property type="taxonomic scope" value="Bacteria"/>
</dbReference>
<dbReference type="HOGENOM" id="CLU_022986_0_1_6"/>
<dbReference type="InParanoid" id="P32099"/>
<dbReference type="OMA" id="RYQNWDW"/>
<dbReference type="OrthoDB" id="9787898at2"/>
<dbReference type="PhylomeDB" id="P32099"/>
<dbReference type="BioCyc" id="EcoCyc:EG11796-MONOMER"/>
<dbReference type="BioCyc" id="MetaCyc:EG11796-MONOMER"/>
<dbReference type="BRENDA" id="6.3.1.20">
    <property type="organism ID" value="2026"/>
</dbReference>
<dbReference type="UniPathway" id="UPA00537">
    <property type="reaction ID" value="UER00594"/>
</dbReference>
<dbReference type="UniPathway" id="UPA00537">
    <property type="reaction ID" value="UER00595"/>
</dbReference>
<dbReference type="EvolutionaryTrace" id="P32099"/>
<dbReference type="PRO" id="PR:P32099"/>
<dbReference type="Proteomes" id="UP000000625">
    <property type="component" value="Chromosome"/>
</dbReference>
<dbReference type="GO" id="GO:0005737">
    <property type="term" value="C:cytoplasm"/>
    <property type="evidence" value="ECO:0000318"/>
    <property type="project" value="GO_Central"/>
</dbReference>
<dbReference type="GO" id="GO:0005829">
    <property type="term" value="C:cytosol"/>
    <property type="evidence" value="ECO:0000314"/>
    <property type="project" value="EcoCyc"/>
</dbReference>
<dbReference type="GO" id="GO:0005524">
    <property type="term" value="F:ATP binding"/>
    <property type="evidence" value="ECO:0007669"/>
    <property type="project" value="UniProtKB-KW"/>
</dbReference>
<dbReference type="GO" id="GO:0016979">
    <property type="term" value="F:lipoate-protein ligase activity"/>
    <property type="evidence" value="ECO:0000314"/>
    <property type="project" value="CAFA"/>
</dbReference>
<dbReference type="GO" id="GO:0017118">
    <property type="term" value="F:lipoyltransferase activity"/>
    <property type="evidence" value="ECO:0000314"/>
    <property type="project" value="CAFA"/>
</dbReference>
<dbReference type="GO" id="GO:0009249">
    <property type="term" value="P:protein lipoylation"/>
    <property type="evidence" value="ECO:0000314"/>
    <property type="project" value="CAFA"/>
</dbReference>
<dbReference type="CDD" id="cd16435">
    <property type="entry name" value="BPL_LplA_LipB"/>
    <property type="match status" value="1"/>
</dbReference>
<dbReference type="FunFam" id="3.30.390.50:FF:000002">
    <property type="entry name" value="Lipoate-protein ligase A"/>
    <property type="match status" value="1"/>
</dbReference>
<dbReference type="FunFam" id="3.30.930.10:FF:000024">
    <property type="entry name" value="Lipoate-protein ligase A"/>
    <property type="match status" value="1"/>
</dbReference>
<dbReference type="Gene3D" id="3.30.930.10">
    <property type="entry name" value="Bira Bifunctional Protein, Domain 2"/>
    <property type="match status" value="1"/>
</dbReference>
<dbReference type="Gene3D" id="3.30.390.50">
    <property type="entry name" value="CO dehydrogenase flavoprotein, C-terminal domain"/>
    <property type="match status" value="1"/>
</dbReference>
<dbReference type="HAMAP" id="MF_01602">
    <property type="entry name" value="LplA"/>
    <property type="match status" value="1"/>
</dbReference>
<dbReference type="InterPro" id="IPR045864">
    <property type="entry name" value="aa-tRNA-synth_II/BPL/LPL"/>
</dbReference>
<dbReference type="InterPro" id="IPR004143">
    <property type="entry name" value="BPL_LPL_catalytic"/>
</dbReference>
<dbReference type="InterPro" id="IPR023741">
    <property type="entry name" value="Lipoate_ligase_A"/>
</dbReference>
<dbReference type="InterPro" id="IPR019491">
    <property type="entry name" value="Lipoate_protein_ligase_C"/>
</dbReference>
<dbReference type="InterPro" id="IPR004562">
    <property type="entry name" value="LipoylTrfase_LipoateP_Ligase"/>
</dbReference>
<dbReference type="NCBIfam" id="TIGR00545">
    <property type="entry name" value="lipoyltrans"/>
    <property type="match status" value="1"/>
</dbReference>
<dbReference type="PANTHER" id="PTHR12561">
    <property type="entry name" value="LIPOATE-PROTEIN LIGASE"/>
    <property type="match status" value="1"/>
</dbReference>
<dbReference type="PANTHER" id="PTHR12561:SF3">
    <property type="entry name" value="LIPOYLTRANSFERASE 1, MITOCHONDRIAL"/>
    <property type="match status" value="1"/>
</dbReference>
<dbReference type="Pfam" id="PF10437">
    <property type="entry name" value="Lip_prot_lig_C"/>
    <property type="match status" value="1"/>
</dbReference>
<dbReference type="Pfam" id="PF21948">
    <property type="entry name" value="LplA-B_cat"/>
    <property type="match status" value="1"/>
</dbReference>
<dbReference type="SUPFAM" id="SSF55681">
    <property type="entry name" value="Class II aaRS and biotin synthetases"/>
    <property type="match status" value="1"/>
</dbReference>
<dbReference type="SUPFAM" id="SSF82649">
    <property type="entry name" value="SufE/NifU"/>
    <property type="match status" value="1"/>
</dbReference>
<dbReference type="PROSITE" id="PS51733">
    <property type="entry name" value="BPL_LPL_CATALYTIC"/>
    <property type="match status" value="1"/>
</dbReference>
<evidence type="ECO:0000250" key="1"/>
<evidence type="ECO:0000255" key="2">
    <source>
        <dbReference type="PROSITE-ProRule" id="PRU01067"/>
    </source>
</evidence>
<evidence type="ECO:0000269" key="3">
    <source>
    </source>
</evidence>
<evidence type="ECO:0000269" key="4">
    <source>
    </source>
</evidence>
<evidence type="ECO:0000269" key="5">
    <source>
    </source>
</evidence>
<evidence type="ECO:0000269" key="6">
    <source>
    </source>
</evidence>
<evidence type="ECO:0000305" key="7"/>
<evidence type="ECO:0007829" key="8">
    <source>
        <dbReference type="PDB" id="3A7A"/>
    </source>
</evidence>
<evidence type="ECO:0007829" key="9">
    <source>
        <dbReference type="PDB" id="3A7R"/>
    </source>
</evidence>
<organism>
    <name type="scientific">Escherichia coli (strain K12)</name>
    <dbReference type="NCBI Taxonomy" id="83333"/>
    <lineage>
        <taxon>Bacteria</taxon>
        <taxon>Pseudomonadati</taxon>
        <taxon>Pseudomonadota</taxon>
        <taxon>Gammaproteobacteria</taxon>
        <taxon>Enterobacterales</taxon>
        <taxon>Enterobacteriaceae</taxon>
        <taxon>Escherichia</taxon>
    </lineage>
</organism>
<protein>
    <recommendedName>
        <fullName>Lipoate-protein ligase A</fullName>
        <ecNumber>6.3.1.20</ecNumber>
    </recommendedName>
    <alternativeName>
        <fullName>Lipoate--protein ligase</fullName>
    </alternativeName>
</protein>
<proteinExistence type="evidence at protein level"/>
<feature type="initiator methionine" description="Removed" evidence="6">
    <location>
        <position position="1"/>
    </location>
</feature>
<feature type="chain" id="PRO_0000209564" description="Lipoate-protein ligase A">
    <location>
        <begin position="2"/>
        <end position="338"/>
    </location>
</feature>
<feature type="domain" description="BPL/LPL catalytic" evidence="2">
    <location>
        <begin position="29"/>
        <end position="216"/>
    </location>
</feature>
<feature type="binding site" evidence="1">
    <location>
        <position position="71"/>
    </location>
    <ligand>
        <name>ATP</name>
        <dbReference type="ChEBI" id="CHEBI:30616"/>
    </ligand>
</feature>
<feature type="binding site" evidence="1">
    <location>
        <begin position="76"/>
        <end position="79"/>
    </location>
    <ligand>
        <name>ATP</name>
        <dbReference type="ChEBI" id="CHEBI:30616"/>
    </ligand>
</feature>
<feature type="binding site" evidence="1">
    <location>
        <position position="134"/>
    </location>
    <ligand>
        <name>(R)-lipoate</name>
        <dbReference type="ChEBI" id="CHEBI:83088"/>
    </ligand>
</feature>
<feature type="binding site" evidence="1">
    <location>
        <position position="134"/>
    </location>
    <ligand>
        <name>ATP</name>
        <dbReference type="ChEBI" id="CHEBI:30616"/>
    </ligand>
</feature>
<feature type="sequence variant" description="In lplA1 or slr1; selenolipoate resistance mutation." evidence="5">
    <original>G</original>
    <variation>S</variation>
    <location>
        <position position="74"/>
    </location>
</feature>
<feature type="mutagenesis site" description="20-fold decrease in affinity for ATP." evidence="3">
    <original>S</original>
    <variation>A</variation>
    <location>
        <position position="73"/>
    </location>
</feature>
<feature type="mutagenesis site" description="More than 10-fold reduction in Vmax." evidence="3">
    <original>R</original>
    <variation>A</variation>
    <location>
        <position position="141"/>
    </location>
</feature>
<feature type="strand" evidence="9">
    <location>
        <begin position="4"/>
        <end position="9"/>
    </location>
</feature>
<feature type="helix" evidence="9">
    <location>
        <begin position="14"/>
        <end position="27"/>
    </location>
</feature>
<feature type="strand" evidence="9">
    <location>
        <begin position="33"/>
        <end position="38"/>
    </location>
</feature>
<feature type="strand" evidence="9">
    <location>
        <begin position="41"/>
        <end position="46"/>
    </location>
</feature>
<feature type="helix" evidence="9">
    <location>
        <begin position="52"/>
        <end position="55"/>
    </location>
</feature>
<feature type="helix" evidence="9">
    <location>
        <begin position="58"/>
        <end position="63"/>
    </location>
</feature>
<feature type="strand" evidence="9">
    <location>
        <begin position="67"/>
        <end position="70"/>
    </location>
</feature>
<feature type="strand" evidence="9">
    <location>
        <begin position="78"/>
        <end position="80"/>
    </location>
</feature>
<feature type="strand" evidence="9">
    <location>
        <begin position="84"/>
        <end position="92"/>
    </location>
</feature>
<feature type="turn" evidence="9">
    <location>
        <begin position="93"/>
        <end position="95"/>
    </location>
</feature>
<feature type="helix" evidence="9">
    <location>
        <begin position="98"/>
        <end position="111"/>
    </location>
</feature>
<feature type="strand" evidence="9">
    <location>
        <begin position="117"/>
        <end position="119"/>
    </location>
</feature>
<feature type="turn" evidence="9">
    <location>
        <begin position="120"/>
        <end position="122"/>
    </location>
</feature>
<feature type="strand" evidence="9">
    <location>
        <begin position="123"/>
        <end position="126"/>
    </location>
</feature>
<feature type="strand" evidence="9">
    <location>
        <begin position="133"/>
        <end position="142"/>
    </location>
</feature>
<feature type="strand" evidence="9">
    <location>
        <begin position="144"/>
        <end position="156"/>
    </location>
</feature>
<feature type="helix" evidence="9">
    <location>
        <begin position="159"/>
        <end position="165"/>
    </location>
</feature>
<feature type="strand" evidence="9">
    <location>
        <begin position="172"/>
        <end position="175"/>
    </location>
</feature>
<feature type="helix" evidence="9">
    <location>
        <begin position="188"/>
        <end position="190"/>
    </location>
</feature>
<feature type="helix" evidence="9">
    <location>
        <begin position="197"/>
        <end position="212"/>
    </location>
</feature>
<feature type="strand" evidence="9">
    <location>
        <begin position="219"/>
        <end position="221"/>
    </location>
</feature>
<feature type="strand" evidence="8">
    <location>
        <begin position="223"/>
        <end position="225"/>
    </location>
</feature>
<feature type="helix" evidence="9">
    <location>
        <begin position="232"/>
        <end position="240"/>
    </location>
</feature>
<feature type="helix" evidence="9">
    <location>
        <begin position="242"/>
        <end position="245"/>
    </location>
</feature>
<feature type="turn" evidence="9">
    <location>
        <begin position="246"/>
        <end position="248"/>
    </location>
</feature>
<feature type="strand" evidence="9">
    <location>
        <begin position="252"/>
        <end position="260"/>
    </location>
</feature>
<feature type="strand" evidence="9">
    <location>
        <begin position="263"/>
        <end position="272"/>
    </location>
</feature>
<feature type="strand" evidence="9">
    <location>
        <begin position="275"/>
        <end position="283"/>
    </location>
</feature>
<feature type="helix" evidence="9">
    <location>
        <begin position="289"/>
        <end position="297"/>
    </location>
</feature>
<feature type="turn" evidence="9">
    <location>
        <begin position="298"/>
        <end position="300"/>
    </location>
</feature>
<feature type="strand" evidence="9">
    <location>
        <begin position="302"/>
        <end position="304"/>
    </location>
</feature>
<feature type="helix" evidence="9">
    <location>
        <begin position="305"/>
        <end position="314"/>
    </location>
</feature>
<feature type="turn" evidence="9">
    <location>
        <begin position="315"/>
        <end position="318"/>
    </location>
</feature>
<feature type="helix" evidence="9">
    <location>
        <begin position="320"/>
        <end position="322"/>
    </location>
</feature>
<feature type="helix" evidence="9">
    <location>
        <begin position="323"/>
        <end position="337"/>
    </location>
</feature>
<keyword id="KW-0002">3D-structure</keyword>
<keyword id="KW-0067">ATP-binding</keyword>
<keyword id="KW-0963">Cytoplasm</keyword>
<keyword id="KW-0903">Direct protein sequencing</keyword>
<keyword id="KW-0436">Ligase</keyword>
<keyword id="KW-0547">Nucleotide-binding</keyword>
<keyword id="KW-1185">Reference proteome</keyword>
<accession>P32099</accession>
<accession>Q2M5T1</accession>
<name>LPLA_ECOLI</name>
<reference key="1">
    <citation type="journal article" date="1994" name="J. Biol. Chem.">
        <title>Identification of the gene encoding lipoate-protein ligase A of Escherichia coli. Molecular cloning and characterization of the lplA gene and gene product.</title>
        <authorList>
            <person name="Morris T.W."/>
            <person name="Reed K.E."/>
            <person name="Cronan J.E. Jr."/>
        </authorList>
    </citation>
    <scope>NUCLEOTIDE SEQUENCE [GENOMIC DNA]</scope>
    <scope>PROTEIN SEQUENCE OF 2-26</scope>
    <scope>CHARACTERIZATION</scope>
    <source>
        <strain>K12 / W3110 / ATCC 27325 / DSM 5911</strain>
    </source>
</reference>
<reference key="2">
    <citation type="journal article" date="1995" name="Nucleic Acids Res.">
        <title>Analysis of the Escherichia coli genome VI: DNA sequence of the region from 92.8 through 100 minutes.</title>
        <authorList>
            <person name="Burland V.D."/>
            <person name="Plunkett G. III"/>
            <person name="Sofia H.J."/>
            <person name="Daniels D.L."/>
            <person name="Blattner F.R."/>
        </authorList>
    </citation>
    <scope>NUCLEOTIDE SEQUENCE [LARGE SCALE GENOMIC DNA]</scope>
    <source>
        <strain>K12 / MG1655 / ATCC 47076</strain>
    </source>
</reference>
<reference key="3">
    <citation type="journal article" date="1997" name="Science">
        <title>The complete genome sequence of Escherichia coli K-12.</title>
        <authorList>
            <person name="Blattner F.R."/>
            <person name="Plunkett G. III"/>
            <person name="Bloch C.A."/>
            <person name="Perna N.T."/>
            <person name="Burland V."/>
            <person name="Riley M."/>
            <person name="Collado-Vides J."/>
            <person name="Glasner J.D."/>
            <person name="Rode C.K."/>
            <person name="Mayhew G.F."/>
            <person name="Gregor J."/>
            <person name="Davis N.W."/>
            <person name="Kirkpatrick H.A."/>
            <person name="Goeden M.A."/>
            <person name="Rose D.J."/>
            <person name="Mau B."/>
            <person name="Shao Y."/>
        </authorList>
    </citation>
    <scope>NUCLEOTIDE SEQUENCE [LARGE SCALE GENOMIC DNA]</scope>
    <source>
        <strain>K12 / MG1655 / ATCC 47076</strain>
    </source>
</reference>
<reference key="4">
    <citation type="journal article" date="2006" name="Mol. Syst. Biol.">
        <title>Highly accurate genome sequences of Escherichia coli K-12 strains MG1655 and W3110.</title>
        <authorList>
            <person name="Hayashi K."/>
            <person name="Morooka N."/>
            <person name="Yamamoto Y."/>
            <person name="Fujita K."/>
            <person name="Isono K."/>
            <person name="Choi S."/>
            <person name="Ohtsubo E."/>
            <person name="Baba T."/>
            <person name="Wanner B.L."/>
            <person name="Mori H."/>
            <person name="Horiuchi T."/>
        </authorList>
    </citation>
    <scope>NUCLEOTIDE SEQUENCE [LARGE SCALE GENOMIC DNA]</scope>
    <source>
        <strain>K12 / W3110 / ATCC 27325 / DSM 5911</strain>
    </source>
</reference>
<reference key="5">
    <citation type="journal article" date="1989" name="Gene">
        <title>An Escherichia coli membrane protein with a unique signal sequence.</title>
        <authorList>
            <person name="Neuwald A.F."/>
            <person name="Stauffer G.V."/>
        </authorList>
    </citation>
    <scope>NUCLEOTIDE SEQUENCE [GENOMIC DNA] OF 1-68</scope>
    <source>
        <strain>K12</strain>
    </source>
</reference>
<reference key="6">
    <citation type="journal article" date="1995" name="Biochem. J.">
        <title>Purification and properties of the lipoate protein ligase of Escherichia coli.</title>
        <authorList>
            <person name="Green D.E."/>
            <person name="Morris T.W."/>
            <person name="Green J."/>
            <person name="Cronan J.E. Jr."/>
            <person name="Guest J.R."/>
        </authorList>
    </citation>
    <scope>PARTIAL PROTEIN SEQUENCE</scope>
    <scope>FUNCTION</scope>
    <scope>SUBSTRATE SPECIFICITY</scope>
    <scope>SUBUNIT</scope>
    <scope>BIOPHYSICOCHEMICAL PROPERTIES</scope>
    <source>
        <strain>K12 / W3110 / ATCC 27325 / DSM 5911</strain>
    </source>
</reference>
<reference key="7">
    <citation type="journal article" date="1995" name="J. Bacteriol.">
        <title>Lipoic acid metabolism in Escherichia coli: the lplA and lipB genes define redundant pathways for ligation of lipoyl groups to apoprotein.</title>
        <authorList>
            <person name="Morris T.W."/>
            <person name="Reed K.E."/>
            <person name="Cronan J.E. Jr."/>
        </authorList>
    </citation>
    <scope>VARIANT SER-74</scope>
</reference>
<reference key="8">
    <citation type="journal article" date="2003" name="J. Bacteriol.">
        <title>The Escherichia coli lipB gene encodes lipoyl (octanoyl)-acyl carrier protein:protein transferase.</title>
        <authorList>
            <person name="Jordan S.W."/>
            <person name="Cronan J.E. Jr."/>
        </authorList>
    </citation>
    <scope>CHARACTERIZATION</scope>
    <source>
        <strain>K12 / JK1</strain>
    </source>
</reference>
<reference key="9">
    <citation type="journal article" date="2005" name="J. Biol. Chem.">
        <title>Crystal structure of lipoate-protein ligase A from Escherichia coli. Determination of the lipoic acid-binding site.</title>
        <authorList>
            <person name="Fujiwara K."/>
            <person name="Toma S."/>
            <person name="Okamura-Ikeda K."/>
            <person name="Motokawa Y."/>
            <person name="Nakagawa A."/>
            <person name="Taniguchi H."/>
        </authorList>
    </citation>
    <scope>X-RAY CRYSTALLOGRAPHY (2.4 ANGSTROMS)</scope>
    <scope>MUTAGENESIS OF SER-73 AND ARG-141</scope>
</reference>
<comment type="function">
    <text evidence="4">Catalyzes both the ATP-dependent activation of exogenously supplied lipoate to lipoyl-AMP and the transfer of the activated lipoyl onto the lipoyl domains of lipoate-dependent enzymes. Is also able to catalyze very poorly the transfer of lipoyl and octanoyl moiety from their acyl carrier protein.</text>
</comment>
<comment type="catalytic activity">
    <reaction>
        <text>L-lysyl-[lipoyl-carrier protein] + (R)-lipoate + ATP = N(6)-[(R)-lipoyl]-L-lysyl-[lipoyl-carrier protein] + AMP + diphosphate + H(+)</text>
        <dbReference type="Rhea" id="RHEA:49288"/>
        <dbReference type="Rhea" id="RHEA-COMP:10500"/>
        <dbReference type="Rhea" id="RHEA-COMP:10502"/>
        <dbReference type="ChEBI" id="CHEBI:15378"/>
        <dbReference type="ChEBI" id="CHEBI:29969"/>
        <dbReference type="ChEBI" id="CHEBI:30616"/>
        <dbReference type="ChEBI" id="CHEBI:33019"/>
        <dbReference type="ChEBI" id="CHEBI:83088"/>
        <dbReference type="ChEBI" id="CHEBI:83099"/>
        <dbReference type="ChEBI" id="CHEBI:456215"/>
        <dbReference type="EC" id="6.3.1.20"/>
    </reaction>
</comment>
<comment type="activity regulation">
    <text>6-seleno-octanoate, 8-thio-octanoate and 8-seleno-octanoate caused 100%, 50% and 63% inhibition respectively. Inhibited by Cu(2+).</text>
</comment>
<comment type="biophysicochemical properties">
    <kinetics>
        <KM evidence="4">1.9 uM for ATP</KM>
        <KM evidence="4">1.7 uM for D,L-lipoic acid</KM>
        <KM evidence="4">152 uM for magnesium ion</KM>
        <Vmax evidence="4">40.0 nmol/min/mg enzyme toward ATP</Vmax>
        <Vmax evidence="4">24.0 nmol/min/mg enzyme toward D,L-lipoic acid</Vmax>
    </kinetics>
    <phDependence>
        <text evidence="4">Most active from pH 5.5 to 8.0. Inactive below pH 4.3.</text>
    </phDependence>
</comment>
<comment type="pathway">
    <text>Protein modification; protein lipoylation via exogenous pathway; protein N(6)-(lipoyl)lysine from lipoate: step 1/2.</text>
</comment>
<comment type="pathway">
    <text>Protein modification; protein lipoylation via exogenous pathway; protein N(6)-(lipoyl)lysine from lipoate: step 2/2.</text>
</comment>
<comment type="subunit">
    <text evidence="4">Monomer.</text>
</comment>
<comment type="subcellular location">
    <subcellularLocation>
        <location>Cytoplasm</location>
    </subcellularLocation>
</comment>
<comment type="miscellaneous">
    <text>In the transfer reaction, the free carboxyl group of lipoic acid is attached via an amide linkage to the epsilon-amino group of a specific lysine residue of lipoyl domains of lipoate-dependent enzymes.</text>
</comment>
<comment type="similarity">
    <text evidence="7">Belongs to the LplA family.</text>
</comment>
<sequence length="338" mass="37926">MSTLRLLISDSYDPWFNLAVEECIFRQMPATQRVLFLWRNADTVVIGRAQNPWKECNTRRMEEDNVRLARRSSGGGAVFHDLGNTCFTFMAGKPEYDKTISTSIVLNALNALGVSAEASGRNDLVVKTVEGDRKVSGSAYRETKDRGFHHGTLLLNADLSRLANYLNPDKKKLAAKGITSVRSRVTNLTELLPGITHEQVCEAITEAFFAHYGERVEAEIISPNKTPDLPNFAETFARQSSWEWNFGQAPAFSHLLDERFTWGGVELHFDVEKGHITRAQVFTDSLNPAPLEALAGRLQGCLYRADMLQQECEALLVDFPEQEKELRELSAWMAGAVR</sequence>